<accession>Q12ST4</accession>
<name>RPOA_SHEDO</name>
<gene>
    <name evidence="1" type="primary">rpoA</name>
    <name type="ordered locus">Sden_0195</name>
</gene>
<proteinExistence type="inferred from homology"/>
<keyword id="KW-0240">DNA-directed RNA polymerase</keyword>
<keyword id="KW-0548">Nucleotidyltransferase</keyword>
<keyword id="KW-1185">Reference proteome</keyword>
<keyword id="KW-0804">Transcription</keyword>
<keyword id="KW-0808">Transferase</keyword>
<comment type="function">
    <text evidence="1">DNA-dependent RNA polymerase catalyzes the transcription of DNA into RNA using the four ribonucleoside triphosphates as substrates.</text>
</comment>
<comment type="catalytic activity">
    <reaction evidence="1">
        <text>RNA(n) + a ribonucleoside 5'-triphosphate = RNA(n+1) + diphosphate</text>
        <dbReference type="Rhea" id="RHEA:21248"/>
        <dbReference type="Rhea" id="RHEA-COMP:14527"/>
        <dbReference type="Rhea" id="RHEA-COMP:17342"/>
        <dbReference type="ChEBI" id="CHEBI:33019"/>
        <dbReference type="ChEBI" id="CHEBI:61557"/>
        <dbReference type="ChEBI" id="CHEBI:140395"/>
        <dbReference type="EC" id="2.7.7.6"/>
    </reaction>
</comment>
<comment type="subunit">
    <text evidence="1">Homodimer. The RNAP catalytic core consists of 2 alpha, 1 beta, 1 beta' and 1 omega subunit. When a sigma factor is associated with the core the holoenzyme is formed, which can initiate transcription.</text>
</comment>
<comment type="domain">
    <text evidence="1">The N-terminal domain is essential for RNAP assembly and basal transcription, whereas the C-terminal domain is involved in interaction with transcriptional regulators and with upstream promoter elements.</text>
</comment>
<comment type="similarity">
    <text evidence="1">Belongs to the RNA polymerase alpha chain family.</text>
</comment>
<evidence type="ECO:0000255" key="1">
    <source>
        <dbReference type="HAMAP-Rule" id="MF_00059"/>
    </source>
</evidence>
<sequence length="329" mass="36245">MQGSVTEFLKPRLVDIEQVNPTRAKVTLEPLERGFGHTLGNALRRILLSSMPGCAVTEVEIDGVLHEYSSKEGVQEDILEILLNLKGLAVTIEGKDEAMLTLSKSGTGPVTAADITHDGDVTIMNPDHVICHLTGNNDISMRIRVERGRGYVPASARAQTEDDDRPIGRLLVDASFSPVARIAYNVEAARVEQRTDLDKLVIDMTTNGTIDPEEAIRRSATILAEQLDAFVELRDVTEPEQKEEKPEFDPILLRPVDDLELTVRSANCLKAEAIHYIGDLVQRTEVELLKTPNLGKKSLTEIKDVLASRGLSLGMRLENWPPASLVDDL</sequence>
<dbReference type="EC" id="2.7.7.6" evidence="1"/>
<dbReference type="EMBL" id="CP000302">
    <property type="protein sequence ID" value="ABE53492.1"/>
    <property type="molecule type" value="Genomic_DNA"/>
</dbReference>
<dbReference type="RefSeq" id="WP_011494659.1">
    <property type="nucleotide sequence ID" value="NC_007954.1"/>
</dbReference>
<dbReference type="SMR" id="Q12ST4"/>
<dbReference type="STRING" id="318161.Sden_0195"/>
<dbReference type="KEGG" id="sdn:Sden_0195"/>
<dbReference type="eggNOG" id="COG0202">
    <property type="taxonomic scope" value="Bacteria"/>
</dbReference>
<dbReference type="HOGENOM" id="CLU_053084_0_0_6"/>
<dbReference type="OrthoDB" id="9805706at2"/>
<dbReference type="Proteomes" id="UP000001982">
    <property type="component" value="Chromosome"/>
</dbReference>
<dbReference type="GO" id="GO:0005737">
    <property type="term" value="C:cytoplasm"/>
    <property type="evidence" value="ECO:0007669"/>
    <property type="project" value="UniProtKB-ARBA"/>
</dbReference>
<dbReference type="GO" id="GO:0000428">
    <property type="term" value="C:DNA-directed RNA polymerase complex"/>
    <property type="evidence" value="ECO:0007669"/>
    <property type="project" value="UniProtKB-KW"/>
</dbReference>
<dbReference type="GO" id="GO:0003677">
    <property type="term" value="F:DNA binding"/>
    <property type="evidence" value="ECO:0007669"/>
    <property type="project" value="UniProtKB-UniRule"/>
</dbReference>
<dbReference type="GO" id="GO:0003899">
    <property type="term" value="F:DNA-directed RNA polymerase activity"/>
    <property type="evidence" value="ECO:0007669"/>
    <property type="project" value="UniProtKB-UniRule"/>
</dbReference>
<dbReference type="GO" id="GO:0046983">
    <property type="term" value="F:protein dimerization activity"/>
    <property type="evidence" value="ECO:0007669"/>
    <property type="project" value="InterPro"/>
</dbReference>
<dbReference type="GO" id="GO:0006351">
    <property type="term" value="P:DNA-templated transcription"/>
    <property type="evidence" value="ECO:0007669"/>
    <property type="project" value="UniProtKB-UniRule"/>
</dbReference>
<dbReference type="CDD" id="cd06928">
    <property type="entry name" value="RNAP_alpha_NTD"/>
    <property type="match status" value="1"/>
</dbReference>
<dbReference type="FunFam" id="1.10.150.20:FF:000001">
    <property type="entry name" value="DNA-directed RNA polymerase subunit alpha"/>
    <property type="match status" value="1"/>
</dbReference>
<dbReference type="FunFam" id="2.170.120.12:FF:000001">
    <property type="entry name" value="DNA-directed RNA polymerase subunit alpha"/>
    <property type="match status" value="1"/>
</dbReference>
<dbReference type="Gene3D" id="1.10.150.20">
    <property type="entry name" value="5' to 3' exonuclease, C-terminal subdomain"/>
    <property type="match status" value="1"/>
</dbReference>
<dbReference type="Gene3D" id="2.170.120.12">
    <property type="entry name" value="DNA-directed RNA polymerase, insert domain"/>
    <property type="match status" value="1"/>
</dbReference>
<dbReference type="Gene3D" id="3.30.1360.10">
    <property type="entry name" value="RNA polymerase, RBP11-like subunit"/>
    <property type="match status" value="1"/>
</dbReference>
<dbReference type="HAMAP" id="MF_00059">
    <property type="entry name" value="RNApol_bact_RpoA"/>
    <property type="match status" value="1"/>
</dbReference>
<dbReference type="InterPro" id="IPR011262">
    <property type="entry name" value="DNA-dir_RNA_pol_insert"/>
</dbReference>
<dbReference type="InterPro" id="IPR011263">
    <property type="entry name" value="DNA-dir_RNA_pol_RpoA/D/Rpb3"/>
</dbReference>
<dbReference type="InterPro" id="IPR011773">
    <property type="entry name" value="DNA-dir_RpoA"/>
</dbReference>
<dbReference type="InterPro" id="IPR036603">
    <property type="entry name" value="RBP11-like"/>
</dbReference>
<dbReference type="InterPro" id="IPR011260">
    <property type="entry name" value="RNAP_asu_C"/>
</dbReference>
<dbReference type="InterPro" id="IPR036643">
    <property type="entry name" value="RNApol_insert_sf"/>
</dbReference>
<dbReference type="NCBIfam" id="NF003513">
    <property type="entry name" value="PRK05182.1-2"/>
    <property type="match status" value="1"/>
</dbReference>
<dbReference type="NCBIfam" id="NF003519">
    <property type="entry name" value="PRK05182.2-5"/>
    <property type="match status" value="1"/>
</dbReference>
<dbReference type="NCBIfam" id="TIGR02027">
    <property type="entry name" value="rpoA"/>
    <property type="match status" value="1"/>
</dbReference>
<dbReference type="Pfam" id="PF01000">
    <property type="entry name" value="RNA_pol_A_bac"/>
    <property type="match status" value="1"/>
</dbReference>
<dbReference type="Pfam" id="PF03118">
    <property type="entry name" value="RNA_pol_A_CTD"/>
    <property type="match status" value="1"/>
</dbReference>
<dbReference type="Pfam" id="PF01193">
    <property type="entry name" value="RNA_pol_L"/>
    <property type="match status" value="1"/>
</dbReference>
<dbReference type="SMART" id="SM00662">
    <property type="entry name" value="RPOLD"/>
    <property type="match status" value="1"/>
</dbReference>
<dbReference type="SUPFAM" id="SSF47789">
    <property type="entry name" value="C-terminal domain of RNA polymerase alpha subunit"/>
    <property type="match status" value="1"/>
</dbReference>
<dbReference type="SUPFAM" id="SSF56553">
    <property type="entry name" value="Insert subdomain of RNA polymerase alpha subunit"/>
    <property type="match status" value="1"/>
</dbReference>
<dbReference type="SUPFAM" id="SSF55257">
    <property type="entry name" value="RBP11-like subunits of RNA polymerase"/>
    <property type="match status" value="1"/>
</dbReference>
<protein>
    <recommendedName>
        <fullName evidence="1">DNA-directed RNA polymerase subunit alpha</fullName>
        <shortName evidence="1">RNAP subunit alpha</shortName>
        <ecNumber evidence="1">2.7.7.6</ecNumber>
    </recommendedName>
    <alternativeName>
        <fullName evidence="1">RNA polymerase subunit alpha</fullName>
    </alternativeName>
    <alternativeName>
        <fullName evidence="1">Transcriptase subunit alpha</fullName>
    </alternativeName>
</protein>
<reference key="1">
    <citation type="submission" date="2006-03" db="EMBL/GenBank/DDBJ databases">
        <title>Complete sequence of Shewanella denitrificans OS217.</title>
        <authorList>
            <consortium name="US DOE Joint Genome Institute"/>
            <person name="Copeland A."/>
            <person name="Lucas S."/>
            <person name="Lapidus A."/>
            <person name="Barry K."/>
            <person name="Detter J.C."/>
            <person name="Glavina del Rio T."/>
            <person name="Hammon N."/>
            <person name="Israni S."/>
            <person name="Dalin E."/>
            <person name="Tice H."/>
            <person name="Pitluck S."/>
            <person name="Brettin T."/>
            <person name="Bruce D."/>
            <person name="Han C."/>
            <person name="Tapia R."/>
            <person name="Gilna P."/>
            <person name="Kiss H."/>
            <person name="Schmutz J."/>
            <person name="Larimer F."/>
            <person name="Land M."/>
            <person name="Hauser L."/>
            <person name="Kyrpides N."/>
            <person name="Lykidis A."/>
            <person name="Richardson P."/>
        </authorList>
    </citation>
    <scope>NUCLEOTIDE SEQUENCE [LARGE SCALE GENOMIC DNA]</scope>
    <source>
        <strain>OS217 / ATCC BAA-1090 / DSM 15013</strain>
    </source>
</reference>
<feature type="chain" id="PRO_0000264543" description="DNA-directed RNA polymerase subunit alpha">
    <location>
        <begin position="1"/>
        <end position="329"/>
    </location>
</feature>
<feature type="region of interest" description="Alpha N-terminal domain (alpha-NTD)" evidence="1">
    <location>
        <begin position="1"/>
        <end position="234"/>
    </location>
</feature>
<feature type="region of interest" description="Alpha C-terminal domain (alpha-CTD)" evidence="1">
    <location>
        <begin position="248"/>
        <end position="329"/>
    </location>
</feature>
<organism>
    <name type="scientific">Shewanella denitrificans (strain OS217 / ATCC BAA-1090 / DSM 15013)</name>
    <dbReference type="NCBI Taxonomy" id="318161"/>
    <lineage>
        <taxon>Bacteria</taxon>
        <taxon>Pseudomonadati</taxon>
        <taxon>Pseudomonadota</taxon>
        <taxon>Gammaproteobacteria</taxon>
        <taxon>Alteromonadales</taxon>
        <taxon>Shewanellaceae</taxon>
        <taxon>Shewanella</taxon>
    </lineage>
</organism>